<name>METK_BRADU</name>
<protein>
    <recommendedName>
        <fullName evidence="1">S-adenosylmethionine synthase</fullName>
        <shortName evidence="1">AdoMet synthase</shortName>
        <ecNumber evidence="1">2.5.1.6</ecNumber>
    </recommendedName>
    <alternativeName>
        <fullName evidence="1">MAT</fullName>
    </alternativeName>
    <alternativeName>
        <fullName evidence="1">Methionine adenosyltransferase</fullName>
    </alternativeName>
</protein>
<keyword id="KW-0067">ATP-binding</keyword>
<keyword id="KW-0963">Cytoplasm</keyword>
<keyword id="KW-0460">Magnesium</keyword>
<keyword id="KW-0479">Metal-binding</keyword>
<keyword id="KW-0547">Nucleotide-binding</keyword>
<keyword id="KW-0554">One-carbon metabolism</keyword>
<keyword id="KW-0630">Potassium</keyword>
<keyword id="KW-1185">Reference proteome</keyword>
<keyword id="KW-0808">Transferase</keyword>
<reference key="1">
    <citation type="journal article" date="2002" name="DNA Res.">
        <title>Complete genomic sequence of nitrogen-fixing symbiotic bacterium Bradyrhizobium japonicum USDA110.</title>
        <authorList>
            <person name="Kaneko T."/>
            <person name="Nakamura Y."/>
            <person name="Sato S."/>
            <person name="Minamisawa K."/>
            <person name="Uchiumi T."/>
            <person name="Sasamoto S."/>
            <person name="Watanabe A."/>
            <person name="Idesawa K."/>
            <person name="Iriguchi M."/>
            <person name="Kawashima K."/>
            <person name="Kohara M."/>
            <person name="Matsumoto M."/>
            <person name="Shimpo S."/>
            <person name="Tsuruoka H."/>
            <person name="Wada T."/>
            <person name="Yamada M."/>
            <person name="Tabata S."/>
        </authorList>
    </citation>
    <scope>NUCLEOTIDE SEQUENCE [LARGE SCALE GENOMIC DNA]</scope>
    <source>
        <strain>JCM 10833 / BCRC 13528 / IAM 13628 / NBRC 14792 / USDA 110</strain>
    </source>
</reference>
<comment type="function">
    <text evidence="1">Catalyzes the formation of S-adenosylmethionine (AdoMet) from methionine and ATP. The overall synthetic reaction is composed of two sequential steps, AdoMet formation and the subsequent tripolyphosphate hydrolysis which occurs prior to release of AdoMet from the enzyme.</text>
</comment>
<comment type="catalytic activity">
    <reaction evidence="1">
        <text>L-methionine + ATP + H2O = S-adenosyl-L-methionine + phosphate + diphosphate</text>
        <dbReference type="Rhea" id="RHEA:21080"/>
        <dbReference type="ChEBI" id="CHEBI:15377"/>
        <dbReference type="ChEBI" id="CHEBI:30616"/>
        <dbReference type="ChEBI" id="CHEBI:33019"/>
        <dbReference type="ChEBI" id="CHEBI:43474"/>
        <dbReference type="ChEBI" id="CHEBI:57844"/>
        <dbReference type="ChEBI" id="CHEBI:59789"/>
        <dbReference type="EC" id="2.5.1.6"/>
    </reaction>
</comment>
<comment type="cofactor">
    <cofactor evidence="1">
        <name>Mg(2+)</name>
        <dbReference type="ChEBI" id="CHEBI:18420"/>
    </cofactor>
    <text evidence="1">Binds 2 divalent ions per subunit.</text>
</comment>
<comment type="cofactor">
    <cofactor evidence="1">
        <name>K(+)</name>
        <dbReference type="ChEBI" id="CHEBI:29103"/>
    </cofactor>
    <text evidence="1">Binds 1 potassium ion per subunit.</text>
</comment>
<comment type="pathway">
    <text evidence="1">Amino-acid biosynthesis; S-adenosyl-L-methionine biosynthesis; S-adenosyl-L-methionine from L-methionine: step 1/1.</text>
</comment>
<comment type="subunit">
    <text evidence="1">Homotetramer; dimer of dimers.</text>
</comment>
<comment type="subcellular location">
    <subcellularLocation>
        <location evidence="1">Cytoplasm</location>
    </subcellularLocation>
</comment>
<comment type="similarity">
    <text evidence="1">Belongs to the AdoMet synthase family.</text>
</comment>
<organism>
    <name type="scientific">Bradyrhizobium diazoefficiens (strain JCM 10833 / BCRC 13528 / IAM 13628 / NBRC 14792 / USDA 110)</name>
    <dbReference type="NCBI Taxonomy" id="224911"/>
    <lineage>
        <taxon>Bacteria</taxon>
        <taxon>Pseudomonadati</taxon>
        <taxon>Pseudomonadota</taxon>
        <taxon>Alphaproteobacteria</taxon>
        <taxon>Hyphomicrobiales</taxon>
        <taxon>Nitrobacteraceae</taxon>
        <taxon>Bradyrhizobium</taxon>
    </lineage>
</organism>
<sequence>MRASYLFTSESVSEGHPDKVCDRISDEIVDLFYREGPKAGIDPWQIRAACETLATTNKVVIAGETRGPKSVTNEQIEGVVRAAIKDIGYEQEGFHWKTCDIEILLHPQSADIAQGVDALQPGEVKEEGAGDQGIMFGYATNETPDLMPAPIFYAHKILRLISEARHSGREKVLGPDSKSQVTVQYENGKPVGVREIVVSHQHLVPDLTSSQVRDIVEPYVREALPKDWITPKTIWHINPTGKFYIGGPDGDAGLTGRKIIVDTYGGAAPHGGGAFSGKDPTKVDRSAAYAARYVAKNIVAAGLADRCTLQLAYAIGVARPLSIYIDTHGTGKVPEEQLEKAAAQAMDLTPRGIRSHLDLNRPIYARTSAYGHFGRTPDNEGGFSWEKTDLVEQLKRAL</sequence>
<proteinExistence type="inferred from homology"/>
<dbReference type="EC" id="2.5.1.6" evidence="1"/>
<dbReference type="EMBL" id="BA000040">
    <property type="protein sequence ID" value="BAC51210.1"/>
    <property type="molecule type" value="Genomic_DNA"/>
</dbReference>
<dbReference type="RefSeq" id="NP_772585.1">
    <property type="nucleotide sequence ID" value="NC_004463.1"/>
</dbReference>
<dbReference type="RefSeq" id="WP_011088686.1">
    <property type="nucleotide sequence ID" value="NC_004463.1"/>
</dbReference>
<dbReference type="SMR" id="Q89HP5"/>
<dbReference type="FunCoup" id="Q89HP5">
    <property type="interactions" value="712"/>
</dbReference>
<dbReference type="STRING" id="224911.AAV28_27265"/>
<dbReference type="EnsemblBacteria" id="BAC51210">
    <property type="protein sequence ID" value="BAC51210"/>
    <property type="gene ID" value="BAC51210"/>
</dbReference>
<dbReference type="GeneID" id="46492942"/>
<dbReference type="KEGG" id="bja:bll5945"/>
<dbReference type="PATRIC" id="fig|224911.44.peg.5895"/>
<dbReference type="eggNOG" id="COG0192">
    <property type="taxonomic scope" value="Bacteria"/>
</dbReference>
<dbReference type="HOGENOM" id="CLU_041802_1_1_5"/>
<dbReference type="InParanoid" id="Q89HP5"/>
<dbReference type="OrthoDB" id="9801686at2"/>
<dbReference type="PhylomeDB" id="Q89HP5"/>
<dbReference type="UniPathway" id="UPA00315">
    <property type="reaction ID" value="UER00080"/>
</dbReference>
<dbReference type="Proteomes" id="UP000002526">
    <property type="component" value="Chromosome"/>
</dbReference>
<dbReference type="GO" id="GO:0005829">
    <property type="term" value="C:cytosol"/>
    <property type="evidence" value="ECO:0000318"/>
    <property type="project" value="GO_Central"/>
</dbReference>
<dbReference type="GO" id="GO:0005524">
    <property type="term" value="F:ATP binding"/>
    <property type="evidence" value="ECO:0007669"/>
    <property type="project" value="UniProtKB-UniRule"/>
</dbReference>
<dbReference type="GO" id="GO:0000287">
    <property type="term" value="F:magnesium ion binding"/>
    <property type="evidence" value="ECO:0007669"/>
    <property type="project" value="UniProtKB-UniRule"/>
</dbReference>
<dbReference type="GO" id="GO:0004478">
    <property type="term" value="F:methionine adenosyltransferase activity"/>
    <property type="evidence" value="ECO:0000318"/>
    <property type="project" value="GO_Central"/>
</dbReference>
<dbReference type="GO" id="GO:0006730">
    <property type="term" value="P:one-carbon metabolic process"/>
    <property type="evidence" value="ECO:0007669"/>
    <property type="project" value="UniProtKB-KW"/>
</dbReference>
<dbReference type="GO" id="GO:0006556">
    <property type="term" value="P:S-adenosylmethionine biosynthetic process"/>
    <property type="evidence" value="ECO:0000318"/>
    <property type="project" value="GO_Central"/>
</dbReference>
<dbReference type="CDD" id="cd18079">
    <property type="entry name" value="S-AdoMet_synt"/>
    <property type="match status" value="1"/>
</dbReference>
<dbReference type="FunFam" id="3.30.300.10:FF:000003">
    <property type="entry name" value="S-adenosylmethionine synthase"/>
    <property type="match status" value="1"/>
</dbReference>
<dbReference type="Gene3D" id="3.30.300.10">
    <property type="match status" value="3"/>
</dbReference>
<dbReference type="HAMAP" id="MF_00086">
    <property type="entry name" value="S_AdoMet_synth1"/>
    <property type="match status" value="1"/>
</dbReference>
<dbReference type="InterPro" id="IPR022631">
    <property type="entry name" value="ADOMET_SYNTHASE_CS"/>
</dbReference>
<dbReference type="InterPro" id="IPR022630">
    <property type="entry name" value="S-AdoMet_synt_C"/>
</dbReference>
<dbReference type="InterPro" id="IPR022629">
    <property type="entry name" value="S-AdoMet_synt_central"/>
</dbReference>
<dbReference type="InterPro" id="IPR022628">
    <property type="entry name" value="S-AdoMet_synt_N"/>
</dbReference>
<dbReference type="InterPro" id="IPR002133">
    <property type="entry name" value="S-AdoMet_synthetase"/>
</dbReference>
<dbReference type="InterPro" id="IPR022636">
    <property type="entry name" value="S-AdoMet_synthetase_sfam"/>
</dbReference>
<dbReference type="NCBIfam" id="TIGR01034">
    <property type="entry name" value="metK"/>
    <property type="match status" value="1"/>
</dbReference>
<dbReference type="PANTHER" id="PTHR11964">
    <property type="entry name" value="S-ADENOSYLMETHIONINE SYNTHETASE"/>
    <property type="match status" value="1"/>
</dbReference>
<dbReference type="Pfam" id="PF02773">
    <property type="entry name" value="S-AdoMet_synt_C"/>
    <property type="match status" value="1"/>
</dbReference>
<dbReference type="Pfam" id="PF02772">
    <property type="entry name" value="S-AdoMet_synt_M"/>
    <property type="match status" value="1"/>
</dbReference>
<dbReference type="Pfam" id="PF00438">
    <property type="entry name" value="S-AdoMet_synt_N"/>
    <property type="match status" value="1"/>
</dbReference>
<dbReference type="PIRSF" id="PIRSF000497">
    <property type="entry name" value="MAT"/>
    <property type="match status" value="1"/>
</dbReference>
<dbReference type="SUPFAM" id="SSF55973">
    <property type="entry name" value="S-adenosylmethionine synthetase"/>
    <property type="match status" value="3"/>
</dbReference>
<dbReference type="PROSITE" id="PS00376">
    <property type="entry name" value="ADOMET_SYNTHASE_1"/>
    <property type="match status" value="1"/>
</dbReference>
<dbReference type="PROSITE" id="PS00377">
    <property type="entry name" value="ADOMET_SYNTHASE_2"/>
    <property type="match status" value="1"/>
</dbReference>
<feature type="chain" id="PRO_0000174501" description="S-adenosylmethionine synthase">
    <location>
        <begin position="1"/>
        <end position="398"/>
    </location>
</feature>
<feature type="region of interest" description="Flexible loop" evidence="1">
    <location>
        <begin position="108"/>
        <end position="118"/>
    </location>
</feature>
<feature type="binding site" description="in other chain" evidence="1">
    <location>
        <position position="16"/>
    </location>
    <ligand>
        <name>ATP</name>
        <dbReference type="ChEBI" id="CHEBI:30616"/>
        <note>ligand shared between two neighboring subunits</note>
    </ligand>
</feature>
<feature type="binding site" evidence="1">
    <location>
        <position position="18"/>
    </location>
    <ligand>
        <name>Mg(2+)</name>
        <dbReference type="ChEBI" id="CHEBI:18420"/>
    </ligand>
</feature>
<feature type="binding site" evidence="1">
    <location>
        <position position="51"/>
    </location>
    <ligand>
        <name>K(+)</name>
        <dbReference type="ChEBI" id="CHEBI:29103"/>
    </ligand>
</feature>
<feature type="binding site" description="in other chain" evidence="1">
    <location>
        <position position="64"/>
    </location>
    <ligand>
        <name>L-methionine</name>
        <dbReference type="ChEBI" id="CHEBI:57844"/>
        <note>ligand shared between two neighboring subunits</note>
    </ligand>
</feature>
<feature type="binding site" description="in other chain" evidence="1">
    <location>
        <position position="108"/>
    </location>
    <ligand>
        <name>L-methionine</name>
        <dbReference type="ChEBI" id="CHEBI:57844"/>
        <note>ligand shared between two neighboring subunits</note>
    </ligand>
</feature>
<feature type="binding site" description="in other chain" evidence="1">
    <location>
        <begin position="176"/>
        <end position="178"/>
    </location>
    <ligand>
        <name>ATP</name>
        <dbReference type="ChEBI" id="CHEBI:30616"/>
        <note>ligand shared between two neighboring subunits</note>
    </ligand>
</feature>
<feature type="binding site" description="in other chain" evidence="1">
    <location>
        <begin position="242"/>
        <end position="243"/>
    </location>
    <ligand>
        <name>ATP</name>
        <dbReference type="ChEBI" id="CHEBI:30616"/>
        <note>ligand shared between two neighboring subunits</note>
    </ligand>
</feature>
<feature type="binding site" evidence="1">
    <location>
        <position position="251"/>
    </location>
    <ligand>
        <name>ATP</name>
        <dbReference type="ChEBI" id="CHEBI:30616"/>
        <note>ligand shared between two neighboring subunits</note>
    </ligand>
</feature>
<feature type="binding site" evidence="1">
    <location>
        <position position="251"/>
    </location>
    <ligand>
        <name>L-methionine</name>
        <dbReference type="ChEBI" id="CHEBI:57844"/>
        <note>ligand shared between two neighboring subunits</note>
    </ligand>
</feature>
<feature type="binding site" description="in other chain" evidence="1">
    <location>
        <begin position="257"/>
        <end position="258"/>
    </location>
    <ligand>
        <name>ATP</name>
        <dbReference type="ChEBI" id="CHEBI:30616"/>
        <note>ligand shared between two neighboring subunits</note>
    </ligand>
</feature>
<feature type="binding site" evidence="1">
    <location>
        <position position="274"/>
    </location>
    <ligand>
        <name>ATP</name>
        <dbReference type="ChEBI" id="CHEBI:30616"/>
        <note>ligand shared between two neighboring subunits</note>
    </ligand>
</feature>
<feature type="binding site" evidence="1">
    <location>
        <position position="278"/>
    </location>
    <ligand>
        <name>ATP</name>
        <dbReference type="ChEBI" id="CHEBI:30616"/>
        <note>ligand shared between two neighboring subunits</note>
    </ligand>
</feature>
<feature type="binding site" description="in other chain" evidence="1">
    <location>
        <position position="282"/>
    </location>
    <ligand>
        <name>L-methionine</name>
        <dbReference type="ChEBI" id="CHEBI:57844"/>
        <note>ligand shared between two neighboring subunits</note>
    </ligand>
</feature>
<evidence type="ECO:0000255" key="1">
    <source>
        <dbReference type="HAMAP-Rule" id="MF_00086"/>
    </source>
</evidence>
<gene>
    <name evidence="1" type="primary">metK</name>
    <name type="ordered locus">bll5945</name>
</gene>
<accession>Q89HP5</accession>